<organism>
    <name type="scientific">Debaryomyces hansenii (strain ATCC 36239 / CBS 767 / BCRC 21394 / JCM 1990 / NBRC 0083 / IGC 2968)</name>
    <name type="common">Yeast</name>
    <name type="synonym">Torulaspora hansenii</name>
    <dbReference type="NCBI Taxonomy" id="284592"/>
    <lineage>
        <taxon>Eukaryota</taxon>
        <taxon>Fungi</taxon>
        <taxon>Dikarya</taxon>
        <taxon>Ascomycota</taxon>
        <taxon>Saccharomycotina</taxon>
        <taxon>Pichiomycetes</taxon>
        <taxon>Debaryomycetaceae</taxon>
        <taxon>Debaryomyces</taxon>
    </lineage>
</organism>
<comment type="function">
    <text evidence="1">Required for preprotein translocation.</text>
</comment>
<comment type="subunit">
    <text evidence="1">Part of a complex that contains SEC61, SEC62, SEC63, SEC66 and SEC72.</text>
</comment>
<comment type="subcellular location">
    <subcellularLocation>
        <location evidence="1">Endoplasmic reticulum membrane</location>
        <topology evidence="1">Multi-pass membrane protein</topology>
    </subcellularLocation>
</comment>
<comment type="similarity">
    <text evidence="4">Belongs to the SEC62 family.</text>
</comment>
<name>SEC62_DEBHA</name>
<protein>
    <recommendedName>
        <fullName>Translocation protein SEC62</fullName>
    </recommendedName>
</protein>
<proteinExistence type="inferred from homology"/>
<dbReference type="EMBL" id="CR382139">
    <property type="protein sequence ID" value="CAG90558.1"/>
    <property type="molecule type" value="Genomic_DNA"/>
</dbReference>
<dbReference type="RefSeq" id="XP_462072.1">
    <property type="nucleotide sequence ID" value="XM_462072.1"/>
</dbReference>
<dbReference type="SMR" id="Q6BI99"/>
<dbReference type="FunCoup" id="Q6BI99">
    <property type="interactions" value="133"/>
</dbReference>
<dbReference type="STRING" id="284592.Q6BI99"/>
<dbReference type="GeneID" id="2904983"/>
<dbReference type="KEGG" id="dha:DEHA2G12386g"/>
<dbReference type="VEuPathDB" id="FungiDB:DEHA2G12386g"/>
<dbReference type="eggNOG" id="KOG2927">
    <property type="taxonomic scope" value="Eukaryota"/>
</dbReference>
<dbReference type="HOGENOM" id="CLU_040936_1_0_1"/>
<dbReference type="InParanoid" id="Q6BI99"/>
<dbReference type="OMA" id="WGWQETK"/>
<dbReference type="OrthoDB" id="200187at2759"/>
<dbReference type="Proteomes" id="UP000000599">
    <property type="component" value="Chromosome G"/>
</dbReference>
<dbReference type="GO" id="GO:0031207">
    <property type="term" value="C:Sec62/Sec63 complex"/>
    <property type="evidence" value="ECO:0007669"/>
    <property type="project" value="EnsemblFungi"/>
</dbReference>
<dbReference type="GO" id="GO:0071256">
    <property type="term" value="C:translocon complex"/>
    <property type="evidence" value="ECO:0007669"/>
    <property type="project" value="EnsemblFungi"/>
</dbReference>
<dbReference type="GO" id="GO:0008320">
    <property type="term" value="F:protein transmembrane transporter activity"/>
    <property type="evidence" value="ECO:0007669"/>
    <property type="project" value="EnsemblFungi"/>
</dbReference>
<dbReference type="GO" id="GO:0031204">
    <property type="term" value="P:post-translational protein targeting to membrane, translocation"/>
    <property type="evidence" value="ECO:0007669"/>
    <property type="project" value="EnsemblFungi"/>
</dbReference>
<dbReference type="InterPro" id="IPR004728">
    <property type="entry name" value="Sec62"/>
</dbReference>
<dbReference type="InterPro" id="IPR011553">
    <property type="entry name" value="Sec62_asco"/>
</dbReference>
<dbReference type="NCBIfam" id="TIGR00869">
    <property type="entry name" value="sec62"/>
    <property type="match status" value="1"/>
</dbReference>
<dbReference type="PANTHER" id="PTHR12443">
    <property type="entry name" value="TRANSLOCATION PROTEIN SEC62"/>
    <property type="match status" value="1"/>
</dbReference>
<dbReference type="PANTHER" id="PTHR12443:SF9">
    <property type="entry name" value="TRANSLOCATION PROTEIN SEC62"/>
    <property type="match status" value="1"/>
</dbReference>
<dbReference type="Pfam" id="PF03839">
    <property type="entry name" value="Sec62"/>
    <property type="match status" value="1"/>
</dbReference>
<keyword id="KW-0256">Endoplasmic reticulum</keyword>
<keyword id="KW-0472">Membrane</keyword>
<keyword id="KW-0653">Protein transport</keyword>
<keyword id="KW-1185">Reference proteome</keyword>
<keyword id="KW-0811">Translocation</keyword>
<keyword id="KW-0812">Transmembrane</keyword>
<keyword id="KW-1133">Transmembrane helix</keyword>
<keyword id="KW-0813">Transport</keyword>
<evidence type="ECO:0000250" key="1"/>
<evidence type="ECO:0000255" key="2"/>
<evidence type="ECO:0000256" key="3">
    <source>
        <dbReference type="SAM" id="MobiDB-lite"/>
    </source>
</evidence>
<evidence type="ECO:0000305" key="4"/>
<sequence length="278" mass="31683">MAEVPITTSNQRSQVAINIANYLKDNKILKQRTGLLNNSEDVEFFRYKRLARALLSDDYKTKQANHKNGLIPIADEQEAAKVFITLIQSQFVIPVEKLHYNEIKQANKSWKPNKTKPTLKQSTKANIEPNAYFVWTYNKPNPFILLYSILLLVGIFTIILFPLWPNFMKIGVWYLSMGLLGLLGLFFLIAIIRLIIYIITLLVLPRAFWLYPNLFEDCGVLESFQPLYGWDEPKKSKKGKSSKSASKPETESSGAATGVKPAENAPTKRKVVLEEVDE</sequence>
<accession>Q6BI99</accession>
<gene>
    <name type="primary">SEC62</name>
    <name type="ordered locus">DEHA2G12386g</name>
</gene>
<feature type="chain" id="PRO_0000206623" description="Translocation protein SEC62">
    <location>
        <begin position="1"/>
        <end position="278"/>
    </location>
</feature>
<feature type="topological domain" description="Cytoplasmic" evidence="2">
    <location>
        <begin position="1"/>
        <end position="142"/>
    </location>
</feature>
<feature type="transmembrane region" description="Helical" evidence="2">
    <location>
        <begin position="143"/>
        <end position="163"/>
    </location>
</feature>
<feature type="topological domain" description="Lumenal" evidence="2">
    <location>
        <begin position="164"/>
        <end position="178"/>
    </location>
</feature>
<feature type="transmembrane region" description="Helical" evidence="2">
    <location>
        <begin position="179"/>
        <end position="199"/>
    </location>
</feature>
<feature type="topological domain" description="Cytoplasmic" evidence="2">
    <location>
        <begin position="200"/>
        <end position="278"/>
    </location>
</feature>
<feature type="region of interest" description="Disordered" evidence="3">
    <location>
        <begin position="230"/>
        <end position="278"/>
    </location>
</feature>
<reference key="1">
    <citation type="journal article" date="2004" name="Nature">
        <title>Genome evolution in yeasts.</title>
        <authorList>
            <person name="Dujon B."/>
            <person name="Sherman D."/>
            <person name="Fischer G."/>
            <person name="Durrens P."/>
            <person name="Casaregola S."/>
            <person name="Lafontaine I."/>
            <person name="de Montigny J."/>
            <person name="Marck C."/>
            <person name="Neuveglise C."/>
            <person name="Talla E."/>
            <person name="Goffard N."/>
            <person name="Frangeul L."/>
            <person name="Aigle M."/>
            <person name="Anthouard V."/>
            <person name="Babour A."/>
            <person name="Barbe V."/>
            <person name="Barnay S."/>
            <person name="Blanchin S."/>
            <person name="Beckerich J.-M."/>
            <person name="Beyne E."/>
            <person name="Bleykasten C."/>
            <person name="Boisrame A."/>
            <person name="Boyer J."/>
            <person name="Cattolico L."/>
            <person name="Confanioleri F."/>
            <person name="de Daruvar A."/>
            <person name="Despons L."/>
            <person name="Fabre E."/>
            <person name="Fairhead C."/>
            <person name="Ferry-Dumazet H."/>
            <person name="Groppi A."/>
            <person name="Hantraye F."/>
            <person name="Hennequin C."/>
            <person name="Jauniaux N."/>
            <person name="Joyet P."/>
            <person name="Kachouri R."/>
            <person name="Kerrest A."/>
            <person name="Koszul R."/>
            <person name="Lemaire M."/>
            <person name="Lesur I."/>
            <person name="Ma L."/>
            <person name="Muller H."/>
            <person name="Nicaud J.-M."/>
            <person name="Nikolski M."/>
            <person name="Oztas S."/>
            <person name="Ozier-Kalogeropoulos O."/>
            <person name="Pellenz S."/>
            <person name="Potier S."/>
            <person name="Richard G.-F."/>
            <person name="Straub M.-L."/>
            <person name="Suleau A."/>
            <person name="Swennen D."/>
            <person name="Tekaia F."/>
            <person name="Wesolowski-Louvel M."/>
            <person name="Westhof E."/>
            <person name="Wirth B."/>
            <person name="Zeniou-Meyer M."/>
            <person name="Zivanovic Y."/>
            <person name="Bolotin-Fukuhara M."/>
            <person name="Thierry A."/>
            <person name="Bouchier C."/>
            <person name="Caudron B."/>
            <person name="Scarpelli C."/>
            <person name="Gaillardin C."/>
            <person name="Weissenbach J."/>
            <person name="Wincker P."/>
            <person name="Souciet J.-L."/>
        </authorList>
    </citation>
    <scope>NUCLEOTIDE SEQUENCE [LARGE SCALE GENOMIC DNA]</scope>
    <source>
        <strain>ATCC 36239 / CBS 767 / BCRC 21394 / JCM 1990 / NBRC 0083 / IGC 2968</strain>
    </source>
</reference>